<keyword id="KW-0002">3D-structure</keyword>
<keyword id="KW-0687">Ribonucleoprotein</keyword>
<keyword id="KW-0689">Ribosomal protein</keyword>
<keyword id="KW-0694">RNA-binding</keyword>
<keyword id="KW-0699">rRNA-binding</keyword>
<gene>
    <name evidence="1" type="primary">rpsS</name>
    <name type="ordered locus">PPA1859</name>
</gene>
<sequence length="93" mass="10510">MPRSLKKGPFVDEHLAKKVTAQNEAGTHNVIKTWSRRSMVTPDMIGHTIGVHDGRKHVPVFVTESMVGHKLGEFAPTRTFKGHVKDDKKARRR</sequence>
<proteinExistence type="evidence at protein level"/>
<protein>
    <recommendedName>
        <fullName evidence="1">Small ribosomal subunit protein uS19</fullName>
    </recommendedName>
    <alternativeName>
        <fullName evidence="2">30S ribosomal protein S19</fullName>
    </alternativeName>
</protein>
<reference key="1">
    <citation type="journal article" date="2004" name="Science">
        <title>The complete genome sequence of Propionibacterium acnes, a commensal of human skin.</title>
        <authorList>
            <person name="Brueggemann H."/>
            <person name="Henne A."/>
            <person name="Hoster F."/>
            <person name="Liesegang H."/>
            <person name="Wiezer A."/>
            <person name="Strittmatter A."/>
            <person name="Hujer S."/>
            <person name="Duerre P."/>
            <person name="Gottschalk G."/>
        </authorList>
    </citation>
    <scope>NUCLEOTIDE SEQUENCE [LARGE SCALE GENOMIC DNA]</scope>
    <source>
        <strain>DSM 16379 / KPA171202</strain>
    </source>
</reference>
<dbReference type="EMBL" id="AE017283">
    <property type="protein sequence ID" value="AAT83583.1"/>
    <property type="molecule type" value="Genomic_DNA"/>
</dbReference>
<dbReference type="RefSeq" id="WP_002516048.1">
    <property type="nucleotide sequence ID" value="NZ_CP025935.1"/>
</dbReference>
<dbReference type="PDB" id="8CRX">
    <property type="method" value="EM"/>
    <property type="resolution" value="2.78 A"/>
    <property type="chains" value="U=1-93"/>
</dbReference>
<dbReference type="PDB" id="8CVO">
    <property type="method" value="EM"/>
    <property type="resolution" value="2.95 A"/>
    <property type="chains" value="U=1-93"/>
</dbReference>
<dbReference type="PDBsum" id="8CRX"/>
<dbReference type="PDBsum" id="8CVO"/>
<dbReference type="SMR" id="Q6A6N0"/>
<dbReference type="EnsemblBacteria" id="AAT83583">
    <property type="protein sequence ID" value="AAT83583"/>
    <property type="gene ID" value="PPA1859"/>
</dbReference>
<dbReference type="GeneID" id="92857806"/>
<dbReference type="KEGG" id="pac:PPA1859"/>
<dbReference type="eggNOG" id="COG0185">
    <property type="taxonomic scope" value="Bacteria"/>
</dbReference>
<dbReference type="HOGENOM" id="CLU_144911_0_1_11"/>
<dbReference type="Proteomes" id="UP000000603">
    <property type="component" value="Chromosome"/>
</dbReference>
<dbReference type="GO" id="GO:0005737">
    <property type="term" value="C:cytoplasm"/>
    <property type="evidence" value="ECO:0007669"/>
    <property type="project" value="UniProtKB-ARBA"/>
</dbReference>
<dbReference type="GO" id="GO:0015935">
    <property type="term" value="C:small ribosomal subunit"/>
    <property type="evidence" value="ECO:0007669"/>
    <property type="project" value="InterPro"/>
</dbReference>
<dbReference type="GO" id="GO:0019843">
    <property type="term" value="F:rRNA binding"/>
    <property type="evidence" value="ECO:0007669"/>
    <property type="project" value="UniProtKB-UniRule"/>
</dbReference>
<dbReference type="GO" id="GO:0003735">
    <property type="term" value="F:structural constituent of ribosome"/>
    <property type="evidence" value="ECO:0007669"/>
    <property type="project" value="InterPro"/>
</dbReference>
<dbReference type="GO" id="GO:0000028">
    <property type="term" value="P:ribosomal small subunit assembly"/>
    <property type="evidence" value="ECO:0007669"/>
    <property type="project" value="TreeGrafter"/>
</dbReference>
<dbReference type="GO" id="GO:0006412">
    <property type="term" value="P:translation"/>
    <property type="evidence" value="ECO:0007669"/>
    <property type="project" value="UniProtKB-UniRule"/>
</dbReference>
<dbReference type="FunFam" id="3.30.860.10:FF:000001">
    <property type="entry name" value="30S ribosomal protein S19"/>
    <property type="match status" value="1"/>
</dbReference>
<dbReference type="Gene3D" id="3.30.860.10">
    <property type="entry name" value="30s Ribosomal Protein S19, Chain A"/>
    <property type="match status" value="1"/>
</dbReference>
<dbReference type="HAMAP" id="MF_00531">
    <property type="entry name" value="Ribosomal_uS19"/>
    <property type="match status" value="1"/>
</dbReference>
<dbReference type="InterPro" id="IPR002222">
    <property type="entry name" value="Ribosomal_uS19"/>
</dbReference>
<dbReference type="InterPro" id="IPR005732">
    <property type="entry name" value="Ribosomal_uS19_bac-type"/>
</dbReference>
<dbReference type="InterPro" id="IPR020934">
    <property type="entry name" value="Ribosomal_uS19_CS"/>
</dbReference>
<dbReference type="InterPro" id="IPR023575">
    <property type="entry name" value="Ribosomal_uS19_SF"/>
</dbReference>
<dbReference type="NCBIfam" id="TIGR01050">
    <property type="entry name" value="rpsS_bact"/>
    <property type="match status" value="1"/>
</dbReference>
<dbReference type="PANTHER" id="PTHR11880">
    <property type="entry name" value="RIBOSOMAL PROTEIN S19P FAMILY MEMBER"/>
    <property type="match status" value="1"/>
</dbReference>
<dbReference type="PANTHER" id="PTHR11880:SF8">
    <property type="entry name" value="SMALL RIBOSOMAL SUBUNIT PROTEIN US19M"/>
    <property type="match status" value="1"/>
</dbReference>
<dbReference type="Pfam" id="PF00203">
    <property type="entry name" value="Ribosomal_S19"/>
    <property type="match status" value="1"/>
</dbReference>
<dbReference type="PIRSF" id="PIRSF002144">
    <property type="entry name" value="Ribosomal_S19"/>
    <property type="match status" value="1"/>
</dbReference>
<dbReference type="PRINTS" id="PR00975">
    <property type="entry name" value="RIBOSOMALS19"/>
</dbReference>
<dbReference type="SUPFAM" id="SSF54570">
    <property type="entry name" value="Ribosomal protein S19"/>
    <property type="match status" value="1"/>
</dbReference>
<dbReference type="PROSITE" id="PS00323">
    <property type="entry name" value="RIBOSOMAL_S19"/>
    <property type="match status" value="1"/>
</dbReference>
<evidence type="ECO:0000255" key="1">
    <source>
        <dbReference type="HAMAP-Rule" id="MF_00531"/>
    </source>
</evidence>
<evidence type="ECO:0000305" key="2"/>
<evidence type="ECO:0007829" key="3">
    <source>
        <dbReference type="PDB" id="8CVO"/>
    </source>
</evidence>
<accession>Q6A6N0</accession>
<feature type="chain" id="PRO_0000129878" description="Small ribosomal subunit protein uS19">
    <location>
        <begin position="1"/>
        <end position="93"/>
    </location>
</feature>
<feature type="helix" evidence="3">
    <location>
        <begin position="5"/>
        <end position="7"/>
    </location>
</feature>
<feature type="helix" evidence="3">
    <location>
        <begin position="15"/>
        <end position="25"/>
    </location>
</feature>
<feature type="strand" evidence="3">
    <location>
        <begin position="29"/>
        <end position="33"/>
    </location>
</feature>
<feature type="helix" evidence="3">
    <location>
        <begin position="42"/>
        <end position="44"/>
    </location>
</feature>
<feature type="strand" evidence="3">
    <location>
        <begin position="48"/>
        <end position="52"/>
    </location>
</feature>
<feature type="strand" evidence="3">
    <location>
        <begin position="54"/>
        <end position="61"/>
    </location>
</feature>
<feature type="helix" evidence="3">
    <location>
        <begin position="64"/>
        <end position="68"/>
    </location>
</feature>
<feature type="helix" evidence="3">
    <location>
        <begin position="71"/>
        <end position="74"/>
    </location>
</feature>
<name>RS19_CUTAK</name>
<organism>
    <name type="scientific">Cutibacterium acnes (strain DSM 16379 / KPA171202)</name>
    <name type="common">Propionibacterium acnes</name>
    <dbReference type="NCBI Taxonomy" id="267747"/>
    <lineage>
        <taxon>Bacteria</taxon>
        <taxon>Bacillati</taxon>
        <taxon>Actinomycetota</taxon>
        <taxon>Actinomycetes</taxon>
        <taxon>Propionibacteriales</taxon>
        <taxon>Propionibacteriaceae</taxon>
        <taxon>Cutibacterium</taxon>
    </lineage>
</organism>
<comment type="function">
    <text evidence="1">Protein S19 forms a complex with S13 that binds strongly to the 16S ribosomal RNA.</text>
</comment>
<comment type="similarity">
    <text evidence="1">Belongs to the universal ribosomal protein uS19 family.</text>
</comment>